<keyword id="KW-0125">Carotenoid biosynthesis</keyword>
<keyword id="KW-0328">Glycosyltransferase</keyword>
<keyword id="KW-0808">Transferase</keyword>
<feature type="chain" id="PRO_0000074162" description="Zeaxanthin glucosyltransferase">
    <location>
        <begin position="1"/>
        <end position="413"/>
    </location>
</feature>
<reference key="1">
    <citation type="journal article" date="1992" name="Proc. Natl. Acad. Sci. U.S.A.">
        <title>Functional expression of zeaxanthin glucosyltransferase from Erwinia herbicola and a proposed uridine diphosphate binding site.</title>
        <authorList>
            <person name="Hundle B.S."/>
            <person name="O'Brien D.A."/>
            <person name="Alberti M."/>
            <person name="Beyer P."/>
            <person name="Hearst J.E."/>
        </authorList>
    </citation>
    <scope>NUCLEOTIDE SEQUENCE [GENOMIC DNA]</scope>
    <scope>CATALYTIC ACTIVITY</scope>
    <source>
        <strain>ATCC 39368 / Eho10</strain>
    </source>
</reference>
<reference key="2">
    <citation type="journal article" date="1994" name="Mol. Gen. Genet.">
        <title>Functional assignment of Erwinia herbicola Eho10 carotenoid genes expressed in Escherichia coli.</title>
        <authorList>
            <person name="Hundle B."/>
            <person name="Alberti M."/>
            <person name="Nievelstein V."/>
            <person name="Beyer P."/>
            <person name="Kleinig H."/>
            <person name="Armstrong G.A."/>
            <person name="Burke D.H."/>
            <person name="Hearst J.E."/>
        </authorList>
    </citation>
    <scope>NUCLEOTIDE SEQUENCE [GENOMIC DNA]</scope>
    <source>
        <strain>ATCC 39368 / Eho10</strain>
    </source>
</reference>
<name>CRTX_PSEVU</name>
<proteinExistence type="evidence at protein level"/>
<protein>
    <recommendedName>
        <fullName>Zeaxanthin glucosyltransferase</fullName>
        <ecNumber>2.4.1.276</ecNumber>
    </recommendedName>
</protein>
<gene>
    <name type="primary">crtX</name>
    <name type="synonym">ugt101</name>
</gene>
<comment type="function">
    <text>Catalyzes the glycosylation reaction which converts zeaxanthin to zeaxanthin bis(beta-D-glucoside). The reaction proceeds in two steps with the monoglucoside as an intermediate.</text>
</comment>
<comment type="catalytic activity">
    <reaction evidence="1">
        <text>all-trans-zeaxanthin + 2 UDP-alpha-D-glucose = zeaxanthin bis(beta-D-glucoside) + 2 UDP + 2 H(+)</text>
        <dbReference type="Rhea" id="RHEA:31543"/>
        <dbReference type="ChEBI" id="CHEBI:15378"/>
        <dbReference type="ChEBI" id="CHEBI:27547"/>
        <dbReference type="ChEBI" id="CHEBI:58223"/>
        <dbReference type="ChEBI" id="CHEBI:58885"/>
        <dbReference type="ChEBI" id="CHEBI:63067"/>
        <dbReference type="EC" id="2.4.1.276"/>
    </reaction>
</comment>
<comment type="pathway">
    <text>Carotenoid biosynthesis; zeaxanthin diglucoside biosynthesis.</text>
</comment>
<comment type="similarity">
    <text evidence="2">Belongs to the UDP-glycosyltransferase family.</text>
</comment>
<organism>
    <name type="scientific">Pseudescherichia vulneris</name>
    <name type="common">Escherichia vulneris</name>
    <dbReference type="NCBI Taxonomy" id="566"/>
    <lineage>
        <taxon>Bacteria</taxon>
        <taxon>Pseudomonadati</taxon>
        <taxon>Pseudomonadota</taxon>
        <taxon>Gammaproteobacteria</taxon>
        <taxon>Enterobacterales</taxon>
        <taxon>Enterobacteriaceae</taxon>
        <taxon>Pseudescherichia</taxon>
    </lineage>
</organism>
<accession>Q01330</accession>
<sequence length="413" mass="44853">MSHFAIVAPPLYSHAVALHALALEMAQRGHRVTFLTGNVASLAEQETERVAFYPLPASVQQAQRNVQQQSNGNLLRLIAAMSSLTDVLCQQLPAILQRLAVDALIVDEMEPAGSLVAEALGLPFISIACALPVNREPGLPLPVMPFHYAEDKRALRRFQVSERIYDALMYPHGQTILRHAQRFGLPERRRLDECLSPLAQISQSVPALDFPRRALPNCFHYVGALRYQPPPQVERSPRSTPRIFASLGTLQGHRLRLFQKIARACASVGAEVTIAHCDGLTPAQADSLYACGATEVVSFVDQPRYVAEANLVITHGGLNTVLDALAAATPVLAVPLSFDQPAVAARLVYNGLGRRVSRFARQQTLADEIAQLLGDETLHQRLATARQQLNDAGGTPRAATLIEQAIAGSESVS</sequence>
<dbReference type="EC" id="2.4.1.276"/>
<dbReference type="EMBL" id="M87280">
    <property type="protein sequence ID" value="AAA64979.1"/>
    <property type="molecule type" value="Genomic_DNA"/>
</dbReference>
<dbReference type="PIR" id="S52980">
    <property type="entry name" value="S52980"/>
</dbReference>
<dbReference type="RefSeq" id="WP_312275143.1">
    <property type="nucleotide sequence ID" value="NZ_JBBLYX010000006.1"/>
</dbReference>
<dbReference type="SMR" id="Q01330"/>
<dbReference type="CAZy" id="GT1">
    <property type="family name" value="Glycosyltransferase Family 1"/>
</dbReference>
<dbReference type="KEGG" id="ag:AAA64979"/>
<dbReference type="BRENDA" id="2.4.1.276">
    <property type="organism ID" value="12671"/>
</dbReference>
<dbReference type="UniPathway" id="UPA00798"/>
<dbReference type="GO" id="GO:0046527">
    <property type="term" value="F:glucosyltransferase activity"/>
    <property type="evidence" value="ECO:0000314"/>
    <property type="project" value="CACAO"/>
</dbReference>
<dbReference type="GO" id="GO:0008194">
    <property type="term" value="F:UDP-glycosyltransferase activity"/>
    <property type="evidence" value="ECO:0007669"/>
    <property type="project" value="InterPro"/>
</dbReference>
<dbReference type="GO" id="GO:0016117">
    <property type="term" value="P:carotenoid biosynthetic process"/>
    <property type="evidence" value="ECO:0007669"/>
    <property type="project" value="UniProtKB-KW"/>
</dbReference>
<dbReference type="CDD" id="cd03784">
    <property type="entry name" value="GT1_Gtf-like"/>
    <property type="match status" value="1"/>
</dbReference>
<dbReference type="FunFam" id="3.40.50.2000:FF:000655">
    <property type="entry name" value="Zeaxanthin glucosyltransferase"/>
    <property type="match status" value="1"/>
</dbReference>
<dbReference type="FunFam" id="3.40.50.2000:FF:000717">
    <property type="entry name" value="Zeaxanthin glucosyltransferase"/>
    <property type="match status" value="1"/>
</dbReference>
<dbReference type="Gene3D" id="3.40.50.2000">
    <property type="entry name" value="Glycogen Phosphorylase B"/>
    <property type="match status" value="2"/>
</dbReference>
<dbReference type="InterPro" id="IPR007235">
    <property type="entry name" value="Glyco_trans_28_C"/>
</dbReference>
<dbReference type="InterPro" id="IPR050271">
    <property type="entry name" value="UDP-glycosyltransferase"/>
</dbReference>
<dbReference type="InterPro" id="IPR002213">
    <property type="entry name" value="UDP_glucos_trans"/>
</dbReference>
<dbReference type="InterPro" id="IPR035595">
    <property type="entry name" value="UDP_glycos_trans_CS"/>
</dbReference>
<dbReference type="PANTHER" id="PTHR48043">
    <property type="entry name" value="EG:EG0003.4 PROTEIN-RELATED"/>
    <property type="match status" value="1"/>
</dbReference>
<dbReference type="PANTHER" id="PTHR48043:SF145">
    <property type="entry name" value="FI06409P-RELATED"/>
    <property type="match status" value="1"/>
</dbReference>
<dbReference type="Pfam" id="PF04101">
    <property type="entry name" value="Glyco_tran_28_C"/>
    <property type="match status" value="1"/>
</dbReference>
<dbReference type="Pfam" id="PF00201">
    <property type="entry name" value="UDPGT"/>
    <property type="match status" value="1"/>
</dbReference>
<dbReference type="SUPFAM" id="SSF53756">
    <property type="entry name" value="UDP-Glycosyltransferase/glycogen phosphorylase"/>
    <property type="match status" value="1"/>
</dbReference>
<dbReference type="PROSITE" id="PS00375">
    <property type="entry name" value="UDPGT"/>
    <property type="match status" value="1"/>
</dbReference>
<evidence type="ECO:0000269" key="1">
    <source>
    </source>
</evidence>
<evidence type="ECO:0000305" key="2"/>